<keyword id="KW-0963">Cytoplasm</keyword>
<keyword id="KW-0274">FAD</keyword>
<keyword id="KW-0285">Flavoprotein</keyword>
<keyword id="KW-0520">NAD</keyword>
<keyword id="KW-0819">tRNA processing</keyword>
<comment type="function">
    <text evidence="1">NAD-binding protein involved in the addition of a carboxymethylaminomethyl (cmnm) group at the wobble position (U34) of certain tRNAs, forming tRNA-cmnm(5)s(2)U34.</text>
</comment>
<comment type="cofactor">
    <cofactor evidence="1">
        <name>FAD</name>
        <dbReference type="ChEBI" id="CHEBI:57692"/>
    </cofactor>
</comment>
<comment type="subunit">
    <text evidence="1">Homodimer. Heterotetramer of two MnmE and two MnmG subunits.</text>
</comment>
<comment type="subcellular location">
    <subcellularLocation>
        <location evidence="1">Cytoplasm</location>
    </subcellularLocation>
</comment>
<comment type="similarity">
    <text evidence="1">Belongs to the MnmG family.</text>
</comment>
<sequence length="632" mass="70127">MTHEFTESYDVIVIGAGHAGVEASLATSRMGCKTLLATINLDMLAFMPCNPSIGGSAKGIVVREIDALGGEMGKNIDKTYIQMKMLNTGKGPAVRALRAQADKSLYAREMKHTVEKQANLTLRQTMIDDILVEDGRVVGVLTATGQKFAAKAVVVTTGTALRGEIILGELKYSSGPNNSLASVTLADNLKKLGLEIGRFKTGTPPRVKASSINYDQTEIQPGDDKPNHFSFMSKDADYLKDQIPCWLTYTNQTSHDIINQNLYRAPMFSGIVKGVGPRYCPSIEDKIVRFADKERHQLFLEPEGRDTEEVYVQGLSTSLPEDVQKDLIHSIKGLEKAEMMRTGYAIEYDIVLPHQLRATLETKLISGLFTAGQTNGTSGYEEAAGQGLIAGINAALKVQGKPELILKRSDAYIGVMIDDLVTKGTLEPYRLLTSRAEYRLILRHDNADMRLTEIGRDIGLVDDERWKAFEIKKNQFDNELKRLNSIKLKPVKATNDRVQELGFKPLTDAMTAKEFMRRPEIDYATAVSFVGPAAEDLDAKIIELLETEIKYEGYIRKALDQVAKMKRMEEKRIPANIDWDAIDSIATEARQKFKKINPETIGQASRISGVNPADISILMIYLEGNGKAHRKY</sequence>
<accession>Q1JJD7</accession>
<reference key="1">
    <citation type="journal article" date="2006" name="Proc. Natl. Acad. Sci. U.S.A.">
        <title>Molecular genetic anatomy of inter- and intraserotype variation in the human bacterial pathogen group A Streptococcus.</title>
        <authorList>
            <person name="Beres S.B."/>
            <person name="Richter E.W."/>
            <person name="Nagiec M.J."/>
            <person name="Sumby P."/>
            <person name="Porcella S.F."/>
            <person name="DeLeo F.R."/>
            <person name="Musser J.M."/>
        </authorList>
    </citation>
    <scope>NUCLEOTIDE SEQUENCE [LARGE SCALE GENOMIC DNA]</scope>
    <source>
        <strain>MGAS9429</strain>
    </source>
</reference>
<name>MNMG_STRPC</name>
<gene>
    <name evidence="1" type="primary">mnmG</name>
    <name evidence="1" type="synonym">gidA</name>
    <name type="ordered locus">MGAS9429_Spy1849</name>
</gene>
<dbReference type="EMBL" id="CP000259">
    <property type="protein sequence ID" value="ABF33036.1"/>
    <property type="molecule type" value="Genomic_DNA"/>
</dbReference>
<dbReference type="RefSeq" id="WP_002982082.1">
    <property type="nucleotide sequence ID" value="NC_008021.1"/>
</dbReference>
<dbReference type="SMR" id="Q1JJD7"/>
<dbReference type="KEGG" id="spk:MGAS9429_Spy1849"/>
<dbReference type="HOGENOM" id="CLU_007831_2_2_9"/>
<dbReference type="Proteomes" id="UP000002433">
    <property type="component" value="Chromosome"/>
</dbReference>
<dbReference type="GO" id="GO:0005829">
    <property type="term" value="C:cytosol"/>
    <property type="evidence" value="ECO:0007669"/>
    <property type="project" value="TreeGrafter"/>
</dbReference>
<dbReference type="GO" id="GO:0050660">
    <property type="term" value="F:flavin adenine dinucleotide binding"/>
    <property type="evidence" value="ECO:0007669"/>
    <property type="project" value="UniProtKB-UniRule"/>
</dbReference>
<dbReference type="GO" id="GO:0030488">
    <property type="term" value="P:tRNA methylation"/>
    <property type="evidence" value="ECO:0007669"/>
    <property type="project" value="TreeGrafter"/>
</dbReference>
<dbReference type="GO" id="GO:0002098">
    <property type="term" value="P:tRNA wobble uridine modification"/>
    <property type="evidence" value="ECO:0007669"/>
    <property type="project" value="InterPro"/>
</dbReference>
<dbReference type="FunFam" id="1.10.10.1800:FF:000001">
    <property type="entry name" value="tRNA uridine 5-carboxymethylaminomethyl modification enzyme MnmG"/>
    <property type="match status" value="1"/>
</dbReference>
<dbReference type="FunFam" id="1.10.150.570:FF:000001">
    <property type="entry name" value="tRNA uridine 5-carboxymethylaminomethyl modification enzyme MnmG"/>
    <property type="match status" value="1"/>
</dbReference>
<dbReference type="FunFam" id="3.50.50.60:FF:000002">
    <property type="entry name" value="tRNA uridine 5-carboxymethylaminomethyl modification enzyme MnmG"/>
    <property type="match status" value="1"/>
</dbReference>
<dbReference type="FunFam" id="3.50.50.60:FF:000063">
    <property type="entry name" value="tRNA uridine 5-carboxymethylaminomethyl modification enzyme MnmG"/>
    <property type="match status" value="1"/>
</dbReference>
<dbReference type="Gene3D" id="3.50.50.60">
    <property type="entry name" value="FAD/NAD(P)-binding domain"/>
    <property type="match status" value="2"/>
</dbReference>
<dbReference type="Gene3D" id="1.10.150.570">
    <property type="entry name" value="GidA associated domain, C-terminal subdomain"/>
    <property type="match status" value="1"/>
</dbReference>
<dbReference type="Gene3D" id="1.10.10.1800">
    <property type="entry name" value="tRNA uridine 5-carboxymethylaminomethyl modification enzyme MnmG/GidA"/>
    <property type="match status" value="1"/>
</dbReference>
<dbReference type="HAMAP" id="MF_00129">
    <property type="entry name" value="MnmG_GidA"/>
    <property type="match status" value="1"/>
</dbReference>
<dbReference type="InterPro" id="IPR036188">
    <property type="entry name" value="FAD/NAD-bd_sf"/>
</dbReference>
<dbReference type="InterPro" id="IPR049312">
    <property type="entry name" value="GIDA_C_N"/>
</dbReference>
<dbReference type="InterPro" id="IPR004416">
    <property type="entry name" value="MnmG"/>
</dbReference>
<dbReference type="InterPro" id="IPR002218">
    <property type="entry name" value="MnmG-rel"/>
</dbReference>
<dbReference type="InterPro" id="IPR020595">
    <property type="entry name" value="MnmG-rel_CS"/>
</dbReference>
<dbReference type="InterPro" id="IPR026904">
    <property type="entry name" value="MnmG_C"/>
</dbReference>
<dbReference type="InterPro" id="IPR047001">
    <property type="entry name" value="MnmG_C_subdom"/>
</dbReference>
<dbReference type="InterPro" id="IPR044920">
    <property type="entry name" value="MnmG_C_subdom_sf"/>
</dbReference>
<dbReference type="InterPro" id="IPR040131">
    <property type="entry name" value="MnmG_N"/>
</dbReference>
<dbReference type="NCBIfam" id="TIGR00136">
    <property type="entry name" value="mnmG_gidA"/>
    <property type="match status" value="1"/>
</dbReference>
<dbReference type="PANTHER" id="PTHR11806">
    <property type="entry name" value="GLUCOSE INHIBITED DIVISION PROTEIN A"/>
    <property type="match status" value="1"/>
</dbReference>
<dbReference type="PANTHER" id="PTHR11806:SF0">
    <property type="entry name" value="PROTEIN MTO1 HOMOLOG, MITOCHONDRIAL"/>
    <property type="match status" value="1"/>
</dbReference>
<dbReference type="Pfam" id="PF01134">
    <property type="entry name" value="GIDA"/>
    <property type="match status" value="1"/>
</dbReference>
<dbReference type="Pfam" id="PF21680">
    <property type="entry name" value="GIDA_C_1st"/>
    <property type="match status" value="1"/>
</dbReference>
<dbReference type="Pfam" id="PF13932">
    <property type="entry name" value="SAM_GIDA_C"/>
    <property type="match status" value="1"/>
</dbReference>
<dbReference type="PRINTS" id="PR00411">
    <property type="entry name" value="PNDRDTASEI"/>
</dbReference>
<dbReference type="SMART" id="SM01228">
    <property type="entry name" value="GIDA_assoc_3"/>
    <property type="match status" value="1"/>
</dbReference>
<dbReference type="SUPFAM" id="SSF51905">
    <property type="entry name" value="FAD/NAD(P)-binding domain"/>
    <property type="match status" value="1"/>
</dbReference>
<dbReference type="PROSITE" id="PS01280">
    <property type="entry name" value="GIDA_1"/>
    <property type="match status" value="1"/>
</dbReference>
<dbReference type="PROSITE" id="PS01281">
    <property type="entry name" value="GIDA_2"/>
    <property type="match status" value="1"/>
</dbReference>
<organism>
    <name type="scientific">Streptococcus pyogenes serotype M12 (strain MGAS9429)</name>
    <dbReference type="NCBI Taxonomy" id="370551"/>
    <lineage>
        <taxon>Bacteria</taxon>
        <taxon>Bacillati</taxon>
        <taxon>Bacillota</taxon>
        <taxon>Bacilli</taxon>
        <taxon>Lactobacillales</taxon>
        <taxon>Streptococcaceae</taxon>
        <taxon>Streptococcus</taxon>
    </lineage>
</organism>
<feature type="chain" id="PRO_1000016690" description="tRNA uridine 5-carboxymethylaminomethyl modification enzyme MnmG">
    <location>
        <begin position="1"/>
        <end position="632"/>
    </location>
</feature>
<feature type="binding site" evidence="1">
    <location>
        <begin position="15"/>
        <end position="20"/>
    </location>
    <ligand>
        <name>FAD</name>
        <dbReference type="ChEBI" id="CHEBI:57692"/>
    </ligand>
</feature>
<feature type="binding site" evidence="1">
    <location>
        <position position="127"/>
    </location>
    <ligand>
        <name>FAD</name>
        <dbReference type="ChEBI" id="CHEBI:57692"/>
    </ligand>
</feature>
<feature type="binding site" evidence="1">
    <location>
        <position position="182"/>
    </location>
    <ligand>
        <name>FAD</name>
        <dbReference type="ChEBI" id="CHEBI:57692"/>
    </ligand>
</feature>
<feature type="binding site" evidence="1">
    <location>
        <begin position="276"/>
        <end position="290"/>
    </location>
    <ligand>
        <name>NAD(+)</name>
        <dbReference type="ChEBI" id="CHEBI:57540"/>
    </ligand>
</feature>
<feature type="binding site" evidence="1">
    <location>
        <position position="373"/>
    </location>
    <ligand>
        <name>FAD</name>
        <dbReference type="ChEBI" id="CHEBI:57692"/>
    </ligand>
</feature>
<protein>
    <recommendedName>
        <fullName evidence="1">tRNA uridine 5-carboxymethylaminomethyl modification enzyme MnmG</fullName>
    </recommendedName>
    <alternativeName>
        <fullName evidence="1">Glucose-inhibited division protein A</fullName>
    </alternativeName>
</protein>
<proteinExistence type="inferred from homology"/>
<evidence type="ECO:0000255" key="1">
    <source>
        <dbReference type="HAMAP-Rule" id="MF_00129"/>
    </source>
</evidence>